<gene>
    <name type="primary">rev</name>
</gene>
<protein>
    <recommendedName>
        <fullName>Protein Rev</fullName>
    </recommendedName>
    <alternativeName>
        <fullName>Regulator of expression of viral proteins</fullName>
    </alternativeName>
</protein>
<proteinExistence type="inferred from homology"/>
<evidence type="ECO:0000250" key="1"/>
<feature type="chain" id="PRO_0000085296" description="Protein Rev">
    <location>
        <begin position="1"/>
        <end position="83"/>
    </location>
</feature>
<feature type="region of interest" description="Homomultimerization" evidence="1">
    <location>
        <begin position="17"/>
        <end position="24"/>
    </location>
</feature>
<feature type="short sequence motif" description="Nuclear localization signal and RNA-binding (RRE)" evidence="1">
    <location>
        <begin position="29"/>
        <end position="45"/>
    </location>
</feature>
<feature type="short sequence motif" description="Nuclear export signal" evidence="1">
    <location>
        <begin position="65"/>
        <end position="76"/>
    </location>
</feature>
<sequence>MSTGNVYQELIRRYLVVVKKLYEEPIPQTARQRRRRKQQLRTRRAQLRELEGRILKQILDRGPDQLCQGVTNLALAEKSESSN</sequence>
<name>REV_SIVGB</name>
<dbReference type="EMBL" id="M27470">
    <property type="protein sequence ID" value="AAB49573.1"/>
    <property type="status" value="ALT_SEQ"/>
    <property type="molecule type" value="Genomic_RNA"/>
</dbReference>
<dbReference type="SMR" id="P22379"/>
<dbReference type="Proteomes" id="UP000259373">
    <property type="component" value="Segment"/>
</dbReference>
<dbReference type="GO" id="GO:0030430">
    <property type="term" value="C:host cell cytoplasm"/>
    <property type="evidence" value="ECO:0007669"/>
    <property type="project" value="UniProtKB-SubCell"/>
</dbReference>
<dbReference type="GO" id="GO:0044196">
    <property type="term" value="C:host cell nucleolus"/>
    <property type="evidence" value="ECO:0007669"/>
    <property type="project" value="UniProtKB-SubCell"/>
</dbReference>
<dbReference type="GO" id="GO:0003723">
    <property type="term" value="F:RNA binding"/>
    <property type="evidence" value="ECO:0007669"/>
    <property type="project" value="UniProtKB-KW"/>
</dbReference>
<dbReference type="GO" id="GO:0051028">
    <property type="term" value="P:mRNA transport"/>
    <property type="evidence" value="ECO:0007669"/>
    <property type="project" value="UniProtKB-KW"/>
</dbReference>
<dbReference type="Gene3D" id="6.10.140.630">
    <property type="match status" value="1"/>
</dbReference>
<keyword id="KW-1035">Host cytoplasm</keyword>
<keyword id="KW-1048">Host nucleus</keyword>
<keyword id="KW-0509">mRNA transport</keyword>
<keyword id="KW-0694">RNA-binding</keyword>
<keyword id="KW-0813">Transport</keyword>
<comment type="function">
    <text evidence="1">Escorts unspliced or incompletely spliced viral pre-mRNAs (late transcripts) out of the nucleus of infected cells. These pre-mRNAs carry a recognition sequence called Rev responsive element (RRE) located in the env gene, that is not present in fully spliced viral mRNAs (early transcripts). This function is essential since most viral proteins are translated from unspliced or partially spliced pre-mRNAs which cannot exit the nucleus by the pathway used by fully processed cellular mRNAs (By similarity).</text>
</comment>
<comment type="subunit">
    <text evidence="1">Homomultimer; when bound to the RRE. Multimeric assembly is essential for activity (By similarity).</text>
</comment>
<comment type="subcellular location">
    <subcellularLocation>
        <location>Host nucleus</location>
        <location>Host nucleolus</location>
    </subcellularLocation>
    <subcellularLocation>
        <location>Host cytoplasm</location>
    </subcellularLocation>
    <text evidence="1">The presence of both nuclear import and nuclear export signals leads to continuous shuttling between the nucleus and cytoplasm.</text>
</comment>
<comment type="domain">
    <text evidence="1">The RNA-binding motif binds to the RRE, a stem-and-loop structure present in incompletely spliced viral pre-mRNAs. This region also contains the NLS which mediates nuclear localization. These overlapping functions prevent Rev bound to RRE from undesirable return to the nucleus. When Rev binds the RRE, the NLS becomes masked while the NES remains accessible (By similarity).</text>
</comment>
<organism>
    <name type="scientific">Simian immunodeficiency virus (isolate GB1)</name>
    <name type="common">SIV-mnd</name>
    <name type="synonym">Simian immunodeficiency virus mandrill</name>
    <dbReference type="NCBI Taxonomy" id="11732"/>
    <lineage>
        <taxon>Viruses</taxon>
        <taxon>Riboviria</taxon>
        <taxon>Pararnavirae</taxon>
        <taxon>Artverviricota</taxon>
        <taxon>Revtraviricetes</taxon>
        <taxon>Ortervirales</taxon>
        <taxon>Retroviridae</taxon>
        <taxon>Orthoretrovirinae</taxon>
        <taxon>Lentivirus</taxon>
        <taxon>Simian immunodeficiency virus</taxon>
    </lineage>
</organism>
<reference key="1">
    <citation type="journal article" date="1989" name="Nature">
        <title>Sequence of a novel simian immunodeficiency virus from a wild-caught African mandrill.</title>
        <authorList>
            <person name="Tsujimoto H."/>
            <person name="Hasegawa A."/>
            <person name="Maki N."/>
            <person name="Fukasawa M."/>
            <person name="Miura T."/>
            <person name="Speidel S."/>
            <person name="Cooper R.W."/>
            <person name="Moriyama E.N."/>
            <person name="Gojobori T."/>
            <person name="Hayami M."/>
        </authorList>
    </citation>
    <scope>NUCLEOTIDE SEQUENCE [GENOMIC RNA]</scope>
</reference>
<organismHost>
    <name type="scientific">Cercopithecidae</name>
    <name type="common">Old World monkeys</name>
    <dbReference type="NCBI Taxonomy" id="9527"/>
</organismHost>
<accession>P22379</accession>